<protein>
    <recommendedName>
        <fullName evidence="1">UPF0114 protein Ent638_3411</fullName>
    </recommendedName>
</protein>
<name>Y3411_ENT38</name>
<dbReference type="EMBL" id="CP000653">
    <property type="protein sequence ID" value="ABP62071.1"/>
    <property type="molecule type" value="Genomic_DNA"/>
</dbReference>
<dbReference type="RefSeq" id="WP_015960399.1">
    <property type="nucleotide sequence ID" value="NC_009436.1"/>
</dbReference>
<dbReference type="STRING" id="399742.Ent638_3411"/>
<dbReference type="GeneID" id="93306378"/>
<dbReference type="KEGG" id="ent:Ent638_3411"/>
<dbReference type="eggNOG" id="COG2862">
    <property type="taxonomic scope" value="Bacteria"/>
</dbReference>
<dbReference type="HOGENOM" id="CLU_097887_1_1_6"/>
<dbReference type="OrthoDB" id="9783569at2"/>
<dbReference type="Proteomes" id="UP000000230">
    <property type="component" value="Chromosome"/>
</dbReference>
<dbReference type="GO" id="GO:0005886">
    <property type="term" value="C:plasma membrane"/>
    <property type="evidence" value="ECO:0007669"/>
    <property type="project" value="UniProtKB-SubCell"/>
</dbReference>
<dbReference type="HAMAP" id="MF_00143">
    <property type="entry name" value="UPF0114"/>
    <property type="match status" value="1"/>
</dbReference>
<dbReference type="InterPro" id="IPR005134">
    <property type="entry name" value="UPF0114"/>
</dbReference>
<dbReference type="InterPro" id="IPR020761">
    <property type="entry name" value="UPF0114_bac"/>
</dbReference>
<dbReference type="NCBIfam" id="TIGR00645">
    <property type="entry name" value="HI0507"/>
    <property type="match status" value="1"/>
</dbReference>
<dbReference type="PANTHER" id="PTHR38596">
    <property type="entry name" value="UPF0114 PROTEIN YQHA"/>
    <property type="match status" value="1"/>
</dbReference>
<dbReference type="PANTHER" id="PTHR38596:SF1">
    <property type="entry name" value="UPF0114 PROTEIN YQHA"/>
    <property type="match status" value="1"/>
</dbReference>
<dbReference type="Pfam" id="PF03350">
    <property type="entry name" value="UPF0114"/>
    <property type="match status" value="1"/>
</dbReference>
<accession>A4WEE1</accession>
<feature type="chain" id="PRO_1000057937" description="UPF0114 protein Ent638_3411">
    <location>
        <begin position="1"/>
        <end position="165"/>
    </location>
</feature>
<feature type="transmembrane region" description="Helical" evidence="1">
    <location>
        <begin position="15"/>
        <end position="35"/>
    </location>
</feature>
<feature type="transmembrane region" description="Helical" evidence="1">
    <location>
        <begin position="53"/>
        <end position="73"/>
    </location>
</feature>
<feature type="transmembrane region" description="Helical" evidence="1">
    <location>
        <begin position="136"/>
        <end position="156"/>
    </location>
</feature>
<keyword id="KW-1003">Cell membrane</keyword>
<keyword id="KW-0472">Membrane</keyword>
<keyword id="KW-0812">Transmembrane</keyword>
<keyword id="KW-1133">Transmembrane helix</keyword>
<organism>
    <name type="scientific">Enterobacter sp. (strain 638)</name>
    <dbReference type="NCBI Taxonomy" id="399742"/>
    <lineage>
        <taxon>Bacteria</taxon>
        <taxon>Pseudomonadati</taxon>
        <taxon>Pseudomonadota</taxon>
        <taxon>Gammaproteobacteria</taxon>
        <taxon>Enterobacterales</taxon>
        <taxon>Enterobacteriaceae</taxon>
        <taxon>Enterobacter</taxon>
    </lineage>
</organism>
<comment type="subcellular location">
    <subcellularLocation>
        <location evidence="1">Cell membrane</location>
        <topology evidence="1">Multi-pass membrane protein</topology>
    </subcellularLocation>
</comment>
<comment type="similarity">
    <text evidence="1">Belongs to the UPF0114 family.</text>
</comment>
<sequence>MERFFENAMYASRWLLAPVYFGLSLALVALSIKFFQEIFHVLPNIFSVAESDLILVLLSLVDMTLVGGLLVMVMFSGYENFVSQLDIAEHKEKLSWLGKMDASSLKNKVAASIVAISSIHLLRVFMDAKNIPDNKLMWYVIIHLTFVLSAFVMGYLDKINRSGKY</sequence>
<proteinExistence type="inferred from homology"/>
<gene>
    <name type="ordered locus">Ent638_3411</name>
</gene>
<reference key="1">
    <citation type="journal article" date="2010" name="PLoS Genet.">
        <title>Genome sequence of the plant growth promoting endophytic bacterium Enterobacter sp. 638.</title>
        <authorList>
            <person name="Taghavi S."/>
            <person name="van der Lelie D."/>
            <person name="Hoffman A."/>
            <person name="Zhang Y.B."/>
            <person name="Walla M.D."/>
            <person name="Vangronsveld J."/>
            <person name="Newman L."/>
            <person name="Monchy S."/>
        </authorList>
    </citation>
    <scope>NUCLEOTIDE SEQUENCE [LARGE SCALE GENOMIC DNA]</scope>
    <source>
        <strain>638</strain>
    </source>
</reference>
<evidence type="ECO:0000255" key="1">
    <source>
        <dbReference type="HAMAP-Rule" id="MF_00143"/>
    </source>
</evidence>